<sequence length="94" mass="10841">MIHSPTLKKNLFVANHLRAKINKLNNKKKKEIIVTWSRASTIIPIMIGHMISIHNGKEHLPIYITDHMVGHKLGEFVPTLNFRGHAKSDNRSRR</sequence>
<name>RR19_EPIVI</name>
<protein>
    <recommendedName>
        <fullName evidence="2">Small ribosomal subunit protein uS19c</fullName>
    </recommendedName>
    <alternativeName>
        <fullName>Plastid 30S ribosomal protein S19</fullName>
    </alternativeName>
</protein>
<dbReference type="EMBL" id="M81884">
    <property type="protein sequence ID" value="AAA65865.1"/>
    <property type="status" value="ALT_INIT"/>
    <property type="molecule type" value="Genomic_DNA"/>
</dbReference>
<dbReference type="PIR" id="S78396">
    <property type="entry name" value="S78396"/>
</dbReference>
<dbReference type="RefSeq" id="NP_054391.1">
    <property type="nucleotide sequence ID" value="NC_001568.1"/>
</dbReference>
<dbReference type="SMR" id="P30062"/>
<dbReference type="GeneID" id="801414"/>
<dbReference type="GO" id="GO:0005763">
    <property type="term" value="C:mitochondrial small ribosomal subunit"/>
    <property type="evidence" value="ECO:0007669"/>
    <property type="project" value="TreeGrafter"/>
</dbReference>
<dbReference type="GO" id="GO:0009536">
    <property type="term" value="C:plastid"/>
    <property type="evidence" value="ECO:0007669"/>
    <property type="project" value="UniProtKB-SubCell"/>
</dbReference>
<dbReference type="GO" id="GO:0019843">
    <property type="term" value="F:rRNA binding"/>
    <property type="evidence" value="ECO:0007669"/>
    <property type="project" value="UniProtKB-KW"/>
</dbReference>
<dbReference type="GO" id="GO:0003735">
    <property type="term" value="F:structural constituent of ribosome"/>
    <property type="evidence" value="ECO:0007669"/>
    <property type="project" value="InterPro"/>
</dbReference>
<dbReference type="GO" id="GO:0000028">
    <property type="term" value="P:ribosomal small subunit assembly"/>
    <property type="evidence" value="ECO:0007669"/>
    <property type="project" value="TreeGrafter"/>
</dbReference>
<dbReference type="GO" id="GO:0006412">
    <property type="term" value="P:translation"/>
    <property type="evidence" value="ECO:0007669"/>
    <property type="project" value="InterPro"/>
</dbReference>
<dbReference type="FunFam" id="3.30.860.10:FF:000001">
    <property type="entry name" value="30S ribosomal protein S19"/>
    <property type="match status" value="1"/>
</dbReference>
<dbReference type="Gene3D" id="3.30.860.10">
    <property type="entry name" value="30s Ribosomal Protein S19, Chain A"/>
    <property type="match status" value="1"/>
</dbReference>
<dbReference type="HAMAP" id="MF_00531">
    <property type="entry name" value="Ribosomal_uS19"/>
    <property type="match status" value="1"/>
</dbReference>
<dbReference type="InterPro" id="IPR002222">
    <property type="entry name" value="Ribosomal_uS19"/>
</dbReference>
<dbReference type="InterPro" id="IPR005732">
    <property type="entry name" value="Ribosomal_uS19_bac-type"/>
</dbReference>
<dbReference type="InterPro" id="IPR020934">
    <property type="entry name" value="Ribosomal_uS19_CS"/>
</dbReference>
<dbReference type="InterPro" id="IPR023575">
    <property type="entry name" value="Ribosomal_uS19_SF"/>
</dbReference>
<dbReference type="NCBIfam" id="TIGR01050">
    <property type="entry name" value="rpsS_bact"/>
    <property type="match status" value="1"/>
</dbReference>
<dbReference type="PANTHER" id="PTHR11880">
    <property type="entry name" value="RIBOSOMAL PROTEIN S19P FAMILY MEMBER"/>
    <property type="match status" value="1"/>
</dbReference>
<dbReference type="PANTHER" id="PTHR11880:SF8">
    <property type="entry name" value="SMALL RIBOSOMAL SUBUNIT PROTEIN US19M"/>
    <property type="match status" value="1"/>
</dbReference>
<dbReference type="Pfam" id="PF00203">
    <property type="entry name" value="Ribosomal_S19"/>
    <property type="match status" value="1"/>
</dbReference>
<dbReference type="PIRSF" id="PIRSF002144">
    <property type="entry name" value="Ribosomal_S19"/>
    <property type="match status" value="1"/>
</dbReference>
<dbReference type="PRINTS" id="PR00975">
    <property type="entry name" value="RIBOSOMALS19"/>
</dbReference>
<dbReference type="SUPFAM" id="SSF54570">
    <property type="entry name" value="Ribosomal protein S19"/>
    <property type="match status" value="1"/>
</dbReference>
<dbReference type="PROSITE" id="PS00323">
    <property type="entry name" value="RIBOSOMAL_S19"/>
    <property type="match status" value="1"/>
</dbReference>
<geneLocation type="non-photosynthetic plastid"/>
<evidence type="ECO:0000250" key="1"/>
<evidence type="ECO:0000305" key="2"/>
<organism>
    <name type="scientific">Epifagus virginiana</name>
    <name type="common">Beechdrops</name>
    <name type="synonym">Orobanche virginiana</name>
    <dbReference type="NCBI Taxonomy" id="4177"/>
    <lineage>
        <taxon>Eukaryota</taxon>
        <taxon>Viridiplantae</taxon>
        <taxon>Streptophyta</taxon>
        <taxon>Embryophyta</taxon>
        <taxon>Tracheophyta</taxon>
        <taxon>Spermatophyta</taxon>
        <taxon>Magnoliopsida</taxon>
        <taxon>eudicotyledons</taxon>
        <taxon>Gunneridae</taxon>
        <taxon>Pentapetalae</taxon>
        <taxon>asterids</taxon>
        <taxon>lamiids</taxon>
        <taxon>Lamiales</taxon>
        <taxon>Orobanchaceae</taxon>
        <taxon>Orobancheae</taxon>
        <taxon>Epifagus</taxon>
    </lineage>
</organism>
<feature type="chain" id="PRO_0000129962" description="Small ribosomal subunit protein uS19c">
    <location>
        <begin position="1"/>
        <end position="94"/>
    </location>
</feature>
<gene>
    <name type="primary">rps19</name>
</gene>
<reference key="1">
    <citation type="journal article" date="1992" name="Proc. Natl. Acad. Sci. U.S.A.">
        <title>Function and evolution of a minimal plastid genome from a nonphotosynthetic parasitic plant.</title>
        <authorList>
            <person name="Wolfe K.H."/>
            <person name="Morden C.W."/>
            <person name="Palmer J.D."/>
        </authorList>
    </citation>
    <scope>NUCLEOTIDE SEQUENCE [LARGE SCALE GENOMIC DNA]</scope>
</reference>
<reference key="2">
    <citation type="journal article" date="1992" name="J. Mol. Evol.">
        <title>Rapid evolution of the plastid translational apparatus in a nonphotosynthetic plant: loss or accelerated sequence evolution of tRNA and ribosomal protein genes.</title>
        <authorList>
            <person name="Wolfe K.H."/>
            <person name="Morden C.W."/>
            <person name="Ems S.C."/>
            <person name="Palmer J.D."/>
        </authorList>
    </citation>
    <scope>NUCLEOTIDE SEQUENCE [GENOMIC DNA]</scope>
</reference>
<proteinExistence type="inferred from homology"/>
<keyword id="KW-0934">Plastid</keyword>
<keyword id="KW-0687">Ribonucleoprotein</keyword>
<keyword id="KW-0689">Ribosomal protein</keyword>
<keyword id="KW-0694">RNA-binding</keyword>
<keyword id="KW-0699">rRNA-binding</keyword>
<comment type="function">
    <text evidence="1">Protein S19 forms a complex with S13 that binds strongly to the 16S ribosomal RNA.</text>
</comment>
<comment type="subcellular location">
    <subcellularLocation>
        <location>Plastid</location>
    </subcellularLocation>
</comment>
<comment type="similarity">
    <text evidence="2">Belongs to the universal ribosomal protein uS19 family.</text>
</comment>
<comment type="sequence caution" evidence="2">
    <conflict type="erroneous initiation">
        <sequence resource="EMBL-CDS" id="AAA65865"/>
    </conflict>
</comment>
<accession>P30062</accession>